<feature type="chain" id="PRO_0000136315" description="Histidine--tRNA ligase">
    <location>
        <begin position="1"/>
        <end position="416"/>
    </location>
</feature>
<gene>
    <name evidence="1" type="primary">hisS</name>
    <name type="ordered locus">MMP1614</name>
</gene>
<dbReference type="EC" id="6.1.1.21" evidence="1"/>
<dbReference type="EMBL" id="BX950229">
    <property type="protein sequence ID" value="CAF31170.1"/>
    <property type="molecule type" value="Genomic_DNA"/>
</dbReference>
<dbReference type="RefSeq" id="WP_011171558.1">
    <property type="nucleotide sequence ID" value="NC_005791.1"/>
</dbReference>
<dbReference type="SMR" id="P60921"/>
<dbReference type="STRING" id="267377.MMP1614"/>
<dbReference type="EnsemblBacteria" id="CAF31170">
    <property type="protein sequence ID" value="CAF31170"/>
    <property type="gene ID" value="MMP1614"/>
</dbReference>
<dbReference type="GeneID" id="2762152"/>
<dbReference type="KEGG" id="mmp:MMP1614"/>
<dbReference type="PATRIC" id="fig|267377.15.peg.1653"/>
<dbReference type="eggNOG" id="arCOG00404">
    <property type="taxonomic scope" value="Archaea"/>
</dbReference>
<dbReference type="HOGENOM" id="CLU_025113_3_1_2"/>
<dbReference type="OrthoDB" id="8659at2157"/>
<dbReference type="Proteomes" id="UP000000590">
    <property type="component" value="Chromosome"/>
</dbReference>
<dbReference type="GO" id="GO:0005737">
    <property type="term" value="C:cytoplasm"/>
    <property type="evidence" value="ECO:0007669"/>
    <property type="project" value="UniProtKB-SubCell"/>
</dbReference>
<dbReference type="GO" id="GO:0005524">
    <property type="term" value="F:ATP binding"/>
    <property type="evidence" value="ECO:0007669"/>
    <property type="project" value="UniProtKB-UniRule"/>
</dbReference>
<dbReference type="GO" id="GO:0004821">
    <property type="term" value="F:histidine-tRNA ligase activity"/>
    <property type="evidence" value="ECO:0007669"/>
    <property type="project" value="UniProtKB-UniRule"/>
</dbReference>
<dbReference type="GO" id="GO:0006427">
    <property type="term" value="P:histidyl-tRNA aminoacylation"/>
    <property type="evidence" value="ECO:0007669"/>
    <property type="project" value="UniProtKB-UniRule"/>
</dbReference>
<dbReference type="GO" id="GO:0000105">
    <property type="term" value="P:L-histidine biosynthetic process"/>
    <property type="evidence" value="ECO:0007669"/>
    <property type="project" value="InterPro"/>
</dbReference>
<dbReference type="CDD" id="cd00773">
    <property type="entry name" value="HisRS-like_core"/>
    <property type="match status" value="1"/>
</dbReference>
<dbReference type="Gene3D" id="3.40.50.800">
    <property type="entry name" value="Anticodon-binding domain"/>
    <property type="match status" value="1"/>
</dbReference>
<dbReference type="Gene3D" id="3.30.930.10">
    <property type="entry name" value="Bira Bifunctional Protein, Domain 2"/>
    <property type="match status" value="1"/>
</dbReference>
<dbReference type="HAMAP" id="MF_00127">
    <property type="entry name" value="His_tRNA_synth"/>
    <property type="match status" value="1"/>
</dbReference>
<dbReference type="HAMAP" id="MF_00125">
    <property type="entry name" value="HisZ"/>
    <property type="match status" value="1"/>
</dbReference>
<dbReference type="InterPro" id="IPR006195">
    <property type="entry name" value="aa-tRNA-synth_II"/>
</dbReference>
<dbReference type="InterPro" id="IPR045864">
    <property type="entry name" value="aa-tRNA-synth_II/BPL/LPL"/>
</dbReference>
<dbReference type="InterPro" id="IPR004154">
    <property type="entry name" value="Anticodon-bd"/>
</dbReference>
<dbReference type="InterPro" id="IPR036621">
    <property type="entry name" value="Anticodon-bd_dom_sf"/>
</dbReference>
<dbReference type="InterPro" id="IPR015807">
    <property type="entry name" value="His-tRNA-ligase"/>
</dbReference>
<dbReference type="InterPro" id="IPR041715">
    <property type="entry name" value="HisRS-like_core"/>
</dbReference>
<dbReference type="InterPro" id="IPR004516">
    <property type="entry name" value="HisRS/HisZ"/>
</dbReference>
<dbReference type="InterPro" id="IPR004517">
    <property type="entry name" value="HisZ"/>
</dbReference>
<dbReference type="NCBIfam" id="TIGR00442">
    <property type="entry name" value="hisS"/>
    <property type="match status" value="1"/>
</dbReference>
<dbReference type="NCBIfam" id="TIGR00443">
    <property type="entry name" value="hisZ_biosyn_reg"/>
    <property type="match status" value="1"/>
</dbReference>
<dbReference type="PANTHER" id="PTHR43707:SF1">
    <property type="entry name" value="HISTIDINE--TRNA LIGASE, MITOCHONDRIAL-RELATED"/>
    <property type="match status" value="1"/>
</dbReference>
<dbReference type="PANTHER" id="PTHR43707">
    <property type="entry name" value="HISTIDYL-TRNA SYNTHETASE"/>
    <property type="match status" value="1"/>
</dbReference>
<dbReference type="Pfam" id="PF03129">
    <property type="entry name" value="HGTP_anticodon"/>
    <property type="match status" value="1"/>
</dbReference>
<dbReference type="Pfam" id="PF13393">
    <property type="entry name" value="tRNA-synt_His"/>
    <property type="match status" value="1"/>
</dbReference>
<dbReference type="PIRSF" id="PIRSF001549">
    <property type="entry name" value="His-tRNA_synth"/>
    <property type="match status" value="1"/>
</dbReference>
<dbReference type="SUPFAM" id="SSF52954">
    <property type="entry name" value="Class II aaRS ABD-related"/>
    <property type="match status" value="1"/>
</dbReference>
<dbReference type="SUPFAM" id="SSF55681">
    <property type="entry name" value="Class II aaRS and biotin synthetases"/>
    <property type="match status" value="1"/>
</dbReference>
<dbReference type="PROSITE" id="PS50862">
    <property type="entry name" value="AA_TRNA_LIGASE_II"/>
    <property type="match status" value="1"/>
</dbReference>
<reference key="1">
    <citation type="journal article" date="2004" name="J. Bacteriol.">
        <title>Complete genome sequence of the genetically tractable hydrogenotrophic methanogen Methanococcus maripaludis.</title>
        <authorList>
            <person name="Hendrickson E.L."/>
            <person name="Kaul R."/>
            <person name="Zhou Y."/>
            <person name="Bovee D."/>
            <person name="Chapman P."/>
            <person name="Chung J."/>
            <person name="Conway de Macario E."/>
            <person name="Dodsworth J.A."/>
            <person name="Gillett W."/>
            <person name="Graham D.E."/>
            <person name="Hackett M."/>
            <person name="Haydock A.K."/>
            <person name="Kang A."/>
            <person name="Land M.L."/>
            <person name="Levy R."/>
            <person name="Lie T.J."/>
            <person name="Major T.A."/>
            <person name="Moore B.C."/>
            <person name="Porat I."/>
            <person name="Palmeiri A."/>
            <person name="Rouse G."/>
            <person name="Saenphimmachak C."/>
            <person name="Soell D."/>
            <person name="Van Dien S."/>
            <person name="Wang T."/>
            <person name="Whitman W.B."/>
            <person name="Xia Q."/>
            <person name="Zhang Y."/>
            <person name="Larimer F.W."/>
            <person name="Olson M.V."/>
            <person name="Leigh J.A."/>
        </authorList>
    </citation>
    <scope>NUCLEOTIDE SEQUENCE [LARGE SCALE GENOMIC DNA]</scope>
    <source>
        <strain>DSM 14266 / JCM 13030 / NBRC 101832 / S2 / LL</strain>
    </source>
</reference>
<accession>P60921</accession>
<sequence>MFQKPKGTRDFLPEEMKKRKTIEKKLRKVFDSYNFSEINTPTFESFELLSKKTGDEIRTQLFVFRDHGDREMGLRPELTSSVARFYINEFKNTPKPVKLYYFTNCFRYENPQAGRYREFWQMGSELIGSKKPIADAEVVNMAIEGLKEINMDFEIHIGHLGVLKGVFEKYNLSDDEGNEIRRLIDKEDMDGLKSVLSRLESEKNIEISKKVFEVLDLKGGKEVIPILKEKLADFESSVAALENLDSILEFVPHDYVINFGIARGLDYYTGMVFEVYGKKEGAKQVCGGGRYDNLIELFEGEPSPAVGFAYGFDRIMLNIDDFEVENESIFVVPVKSSEMLLKECLKIAKTLRDSGKSVEVDLMGRKLNKALNYANTKNIKKVLIVGENDIRDGKVSLKNMETGEQSLIELKDILNI</sequence>
<proteinExistence type="inferred from homology"/>
<name>SYH_METMP</name>
<protein>
    <recommendedName>
        <fullName evidence="1">Histidine--tRNA ligase</fullName>
        <ecNumber evidence="1">6.1.1.21</ecNumber>
    </recommendedName>
    <alternativeName>
        <fullName evidence="1">Histidyl-tRNA synthetase</fullName>
        <shortName evidence="1">HisRS</shortName>
    </alternativeName>
</protein>
<keyword id="KW-0030">Aminoacyl-tRNA synthetase</keyword>
<keyword id="KW-0067">ATP-binding</keyword>
<keyword id="KW-0963">Cytoplasm</keyword>
<keyword id="KW-0436">Ligase</keyword>
<keyword id="KW-0547">Nucleotide-binding</keyword>
<keyword id="KW-0648">Protein biosynthesis</keyword>
<keyword id="KW-1185">Reference proteome</keyword>
<comment type="catalytic activity">
    <reaction evidence="1">
        <text>tRNA(His) + L-histidine + ATP = L-histidyl-tRNA(His) + AMP + diphosphate + H(+)</text>
        <dbReference type="Rhea" id="RHEA:17313"/>
        <dbReference type="Rhea" id="RHEA-COMP:9665"/>
        <dbReference type="Rhea" id="RHEA-COMP:9689"/>
        <dbReference type="ChEBI" id="CHEBI:15378"/>
        <dbReference type="ChEBI" id="CHEBI:30616"/>
        <dbReference type="ChEBI" id="CHEBI:33019"/>
        <dbReference type="ChEBI" id="CHEBI:57595"/>
        <dbReference type="ChEBI" id="CHEBI:78442"/>
        <dbReference type="ChEBI" id="CHEBI:78527"/>
        <dbReference type="ChEBI" id="CHEBI:456215"/>
        <dbReference type="EC" id="6.1.1.21"/>
    </reaction>
</comment>
<comment type="subcellular location">
    <subcellularLocation>
        <location evidence="1">Cytoplasm</location>
    </subcellularLocation>
</comment>
<comment type="similarity">
    <text evidence="1">Belongs to the class-II aminoacyl-tRNA synthetase family.</text>
</comment>
<organism>
    <name type="scientific">Methanococcus maripaludis (strain DSM 14266 / JCM 13030 / NBRC 101832 / S2 / LL)</name>
    <dbReference type="NCBI Taxonomy" id="267377"/>
    <lineage>
        <taxon>Archaea</taxon>
        <taxon>Methanobacteriati</taxon>
        <taxon>Methanobacteriota</taxon>
        <taxon>Methanomada group</taxon>
        <taxon>Methanococci</taxon>
        <taxon>Methanococcales</taxon>
        <taxon>Methanococcaceae</taxon>
        <taxon>Methanococcus</taxon>
    </lineage>
</organism>
<evidence type="ECO:0000255" key="1">
    <source>
        <dbReference type="HAMAP-Rule" id="MF_00127"/>
    </source>
</evidence>